<comment type="function">
    <text evidence="3">Catalyzes the first and rate-limiting step of polyamine biosynthesis that converts ornithine into putrescine, which is the precursor for the polyamines, spermidine and spermine. Polyamines are essential for cell proliferation and are implicated in cellular processes, ranging from DNA replication to apoptosis.</text>
</comment>
<comment type="catalytic activity">
    <reaction evidence="3">
        <text>L-ornithine + H(+) = putrescine + CO2</text>
        <dbReference type="Rhea" id="RHEA:22964"/>
        <dbReference type="ChEBI" id="CHEBI:15378"/>
        <dbReference type="ChEBI" id="CHEBI:16526"/>
        <dbReference type="ChEBI" id="CHEBI:46911"/>
        <dbReference type="ChEBI" id="CHEBI:326268"/>
        <dbReference type="EC" id="4.1.1.17"/>
    </reaction>
</comment>
<comment type="cofactor">
    <cofactor evidence="3">
        <name>pyridoxal 5'-phosphate</name>
        <dbReference type="ChEBI" id="CHEBI:597326"/>
    </cofactor>
</comment>
<comment type="activity regulation">
    <text evidence="3">Inhibited by antizyme (AZ) OAZ1 in response to polyamine levels. AZ inhibits the assembly of the functional homodimer by binding to ODC monomers and targeting them for ubiquitin-independent proteolytic destruction by the 26S proteasome.</text>
</comment>
<comment type="pathway">
    <text>Amine and polyamine biosynthesis; putrescine biosynthesis via L-ornithine pathway; putrescine from L-ornithine: step 1/1.</text>
</comment>
<comment type="subunit">
    <text evidence="3 4">Homodimer (By similarity). Only the dimer is catalytically active, as the active sites are constructed of residues from both monomers (By similarity).</text>
</comment>
<comment type="subcellular location">
    <subcellularLocation>
        <location evidence="3">Cytoplasm</location>
    </subcellularLocation>
</comment>
<comment type="similarity">
    <text evidence="5">Belongs to the Orn/Lys/Arg decarboxylase class-II family.</text>
</comment>
<organism>
    <name type="scientific">Candida albicans (strain SC5314 / ATCC MYA-2876)</name>
    <name type="common">Yeast</name>
    <dbReference type="NCBI Taxonomy" id="237561"/>
    <lineage>
        <taxon>Eukaryota</taxon>
        <taxon>Fungi</taxon>
        <taxon>Dikarya</taxon>
        <taxon>Ascomycota</taxon>
        <taxon>Saccharomycotina</taxon>
        <taxon>Pichiomycetes</taxon>
        <taxon>Debaryomycetaceae</taxon>
        <taxon>Candida/Lodderomyces clade</taxon>
        <taxon>Candida</taxon>
    </lineage>
</organism>
<gene>
    <name type="primary">SPE1</name>
    <name type="synonym">ORD1</name>
    <name type="ordered locus">CAALFM_C100740CA</name>
    <name type="ORF">CaO19.13453</name>
    <name type="ORF">CaO19.6032</name>
</gene>
<sequence>MKHTIIENEPEIKLQNDLNHHIEISPNTKTTNGTTTTTTTLNVNKTLKAIDLIETSIKNHISTIDHENCLPNDEDSFFVCDLGEIINSVNQWQQILPMVQPYYAVKCNSNPQILTTLSELGVNFDCASKNEIDLVLSLGIHQAHERIIYANPCKTNSFIRHAADENVNLTTVDNVHELYKLAKFHPHCKILIRLITDDSTAQCQLSTKFGCDLNTAIGEILPKAKELGLQVHGVAFHVGSGAKDFSSIYQAIKDSRILFDEMLSMGFTPKLLDIGGGFERETFPQSSQMVKFALEKFFPIEFSQLNEIKFIAEPGRFMVANAFTLITHIIARRDLPTGGNNNNNDMTPSAMLYINDGVYGNLNCILFDHQTPKVYVLTNENQLFYKQEMMRSLSVNNNNNNNNKTDGFKFSIWGPTCDGLDCVSSLAKLSKNVQVGDWLFFENVGAYTSCASTKFNGLSSGETKTLYVNSNEE</sequence>
<proteinExistence type="inferred from homology"/>
<name>DCOR_CANAL</name>
<feature type="chain" id="PRO_0000149905" description="Ornithine decarboxylase">
    <location>
        <begin position="1"/>
        <end position="473"/>
    </location>
</feature>
<feature type="active site" description="Proton donor; shared with dimeric partner" evidence="4">
    <location>
        <position position="417"/>
    </location>
</feature>
<feature type="binding site" evidence="4">
    <location>
        <position position="240"/>
    </location>
    <ligand>
        <name>pyridoxal 5'-phosphate</name>
        <dbReference type="ChEBI" id="CHEBI:597326"/>
    </ligand>
</feature>
<feature type="binding site" evidence="4">
    <location>
        <position position="277"/>
    </location>
    <ligand>
        <name>pyridoxal 5'-phosphate</name>
        <dbReference type="ChEBI" id="CHEBI:597326"/>
    </ligand>
</feature>
<feature type="binding site" evidence="4">
    <location>
        <begin position="313"/>
        <end position="316"/>
    </location>
    <ligand>
        <name>pyridoxal 5'-phosphate</name>
        <dbReference type="ChEBI" id="CHEBI:597326"/>
    </ligand>
</feature>
<feature type="binding site" description="in other chain" evidence="2">
    <location>
        <begin position="367"/>
        <end position="368"/>
    </location>
    <ligand>
        <name>substrate</name>
        <note>ligand shared between dimeric partners</note>
    </ligand>
</feature>
<feature type="binding site" evidence="2">
    <location>
        <position position="418"/>
    </location>
    <ligand>
        <name>substrate</name>
        <note>ligand shared between dimeric partners</note>
    </ligand>
</feature>
<feature type="binding site" evidence="4">
    <location>
        <position position="447"/>
    </location>
    <ligand>
        <name>pyridoxal 5'-phosphate</name>
        <dbReference type="ChEBI" id="CHEBI:597326"/>
    </ligand>
</feature>
<feature type="site" description="Stacks against the aromatic ring of pyridoxal phosphate and stabilizes reaction intermediates" evidence="1">
    <location>
        <position position="237"/>
    </location>
</feature>
<feature type="modified residue" description="N6-(pyridoxal phosphate)lysine" evidence="4">
    <location>
        <position position="106"/>
    </location>
</feature>
<feature type="sequence conflict" description="In Ref. 2; CAA64451." evidence="5" ref="2">
    <original>I</original>
    <variation>S</variation>
    <location>
        <position position="95"/>
    </location>
</feature>
<feature type="sequence conflict" description="In Ref. 2; CAA64451." evidence="5" ref="2">
    <original>D</original>
    <variation>N</variation>
    <location>
        <position position="164"/>
    </location>
</feature>
<feature type="sequence conflict" description="In Ref. 2; CAA64451." evidence="5" ref="2">
    <original>G</original>
    <variation>S</variation>
    <location>
        <position position="228"/>
    </location>
</feature>
<feature type="sequence conflict" description="In Ref. 1; AAC49877 and 2; CAA64451." evidence="5" ref="1 2">
    <original>L</original>
    <variation>S</variation>
    <location>
        <position position="305"/>
    </location>
</feature>
<feature type="sequence conflict" description="In Ref. 2; CAA64451." evidence="5" ref="2">
    <original>N</original>
    <variation>H</variation>
    <location>
        <position position="342"/>
    </location>
</feature>
<feature type="sequence conflict" description="In Ref. 2; CAA64451." evidence="5" ref="2">
    <location>
        <begin position="399"/>
        <end position="401"/>
    </location>
</feature>
<protein>
    <recommendedName>
        <fullName>Ornithine decarboxylase</fullName>
        <shortName>ODC</shortName>
        <ecNumber>4.1.1.17</ecNumber>
    </recommendedName>
</protein>
<reference key="1">
    <citation type="journal article" date="1997" name="Yeast">
        <title>Isolation and sequence of the gene encoding ornithine decarboxylase, SPE1, from Candida albicans by complementation of a spe1 delta strain of Saccharomyces cerevisiae.</title>
        <authorList>
            <person name="McNemar M.D."/>
            <person name="Gorman J.A."/>
            <person name="Buckley H.R."/>
        </authorList>
    </citation>
    <scope>NUCLEOTIDE SEQUENCE [GENOMIC DNA]</scope>
</reference>
<reference key="2">
    <citation type="journal article" date="1997" name="Curr. Genet.">
        <title>The ornithine decarboxylase gene from Candida albicans. Sequence analysis and expression during dimorphism.</title>
        <authorList>
            <person name="Lopez M.C."/>
            <person name="Garcia S."/>
            <person name="Ruiz-Herrera J."/>
            <person name="Dominguez A."/>
        </authorList>
    </citation>
    <scope>NUCLEOTIDE SEQUENCE [GENOMIC DNA]</scope>
    <source>
        <strain>ATCC 26555</strain>
    </source>
</reference>
<reference key="3">
    <citation type="journal article" date="2004" name="Proc. Natl. Acad. Sci. U.S.A.">
        <title>The diploid genome sequence of Candida albicans.</title>
        <authorList>
            <person name="Jones T."/>
            <person name="Federspiel N.A."/>
            <person name="Chibana H."/>
            <person name="Dungan J."/>
            <person name="Kalman S."/>
            <person name="Magee B.B."/>
            <person name="Newport G."/>
            <person name="Thorstenson Y.R."/>
            <person name="Agabian N."/>
            <person name="Magee P.T."/>
            <person name="Davis R.W."/>
            <person name="Scherer S."/>
        </authorList>
    </citation>
    <scope>NUCLEOTIDE SEQUENCE [LARGE SCALE GENOMIC DNA]</scope>
    <source>
        <strain>SC5314 / ATCC MYA-2876</strain>
    </source>
</reference>
<reference key="4">
    <citation type="journal article" date="2007" name="Genome Biol.">
        <title>Assembly of the Candida albicans genome into sixteen supercontigs aligned on the eight chromosomes.</title>
        <authorList>
            <person name="van het Hoog M."/>
            <person name="Rast T.J."/>
            <person name="Martchenko M."/>
            <person name="Grindle S."/>
            <person name="Dignard D."/>
            <person name="Hogues H."/>
            <person name="Cuomo C."/>
            <person name="Berriman M."/>
            <person name="Scherer S."/>
            <person name="Magee B.B."/>
            <person name="Whiteway M."/>
            <person name="Chibana H."/>
            <person name="Nantel A."/>
            <person name="Magee P.T."/>
        </authorList>
    </citation>
    <scope>GENOME REANNOTATION</scope>
    <source>
        <strain>SC5314 / ATCC MYA-2876</strain>
    </source>
</reference>
<reference key="5">
    <citation type="journal article" date="2013" name="Genome Biol.">
        <title>Assembly of a phased diploid Candida albicans genome facilitates allele-specific measurements and provides a simple model for repeat and indel structure.</title>
        <authorList>
            <person name="Muzzey D."/>
            <person name="Schwartz K."/>
            <person name="Weissman J.S."/>
            <person name="Sherlock G."/>
        </authorList>
    </citation>
    <scope>NUCLEOTIDE SEQUENCE [LARGE SCALE GENOMIC DNA]</scope>
    <scope>GENOME REANNOTATION</scope>
    <source>
        <strain>SC5314 / ATCC MYA-2876</strain>
    </source>
</reference>
<accession>P78599</accession>
<accession>A0A1D8PCA2</accession>
<accession>P78592</accession>
<accession>Q5ABD8</accession>
<dbReference type="EC" id="4.1.1.17"/>
<dbReference type="EMBL" id="U85005">
    <property type="protein sequence ID" value="AAC49877.1"/>
    <property type="molecule type" value="Genomic_DNA"/>
</dbReference>
<dbReference type="EMBL" id="X94994">
    <property type="protein sequence ID" value="CAA64451.1"/>
    <property type="molecule type" value="Genomic_DNA"/>
</dbReference>
<dbReference type="EMBL" id="CP017623">
    <property type="protein sequence ID" value="AOW25771.1"/>
    <property type="molecule type" value="Genomic_DNA"/>
</dbReference>
<dbReference type="RefSeq" id="XP_718994.2">
    <property type="nucleotide sequence ID" value="XM_713901.2"/>
</dbReference>
<dbReference type="SMR" id="P78599"/>
<dbReference type="FunCoup" id="P78599">
    <property type="interactions" value="1539"/>
</dbReference>
<dbReference type="STRING" id="237561.P78599"/>
<dbReference type="EnsemblFungi" id="C1_00740C_A-T">
    <property type="protein sequence ID" value="C1_00740C_A-T-p1"/>
    <property type="gene ID" value="C1_00740C_A"/>
</dbReference>
<dbReference type="GeneID" id="3639327"/>
<dbReference type="KEGG" id="cal:CAALFM_C100740CA"/>
<dbReference type="CGD" id="CAL0000182839">
    <property type="gene designation" value="SPE1"/>
</dbReference>
<dbReference type="VEuPathDB" id="FungiDB:C1_00740C_A"/>
<dbReference type="eggNOG" id="KOG0622">
    <property type="taxonomic scope" value="Eukaryota"/>
</dbReference>
<dbReference type="HOGENOM" id="CLU_026444_1_1_1"/>
<dbReference type="InParanoid" id="P78599"/>
<dbReference type="OrthoDB" id="5034579at2759"/>
<dbReference type="UniPathway" id="UPA00535">
    <property type="reaction ID" value="UER00288"/>
</dbReference>
<dbReference type="PRO" id="PR:P78599"/>
<dbReference type="Proteomes" id="UP000000559">
    <property type="component" value="Chromosome 1"/>
</dbReference>
<dbReference type="GO" id="GO:0005737">
    <property type="term" value="C:cytoplasm"/>
    <property type="evidence" value="ECO:0000318"/>
    <property type="project" value="GO_Central"/>
</dbReference>
<dbReference type="GO" id="GO:0004586">
    <property type="term" value="F:ornithine decarboxylase activity"/>
    <property type="evidence" value="ECO:0000316"/>
    <property type="project" value="CGD"/>
</dbReference>
<dbReference type="GO" id="GO:0015940">
    <property type="term" value="P:pantothenate biosynthetic process"/>
    <property type="evidence" value="ECO:0007669"/>
    <property type="project" value="EnsemblFungi"/>
</dbReference>
<dbReference type="GO" id="GO:0006596">
    <property type="term" value="P:polyamine biosynthetic process"/>
    <property type="evidence" value="ECO:0000316"/>
    <property type="project" value="CGD"/>
</dbReference>
<dbReference type="GO" id="GO:0033387">
    <property type="term" value="P:putrescine biosynthetic process from arginine, via ornithine"/>
    <property type="evidence" value="ECO:0000318"/>
    <property type="project" value="GO_Central"/>
</dbReference>
<dbReference type="CDD" id="cd00622">
    <property type="entry name" value="PLPDE_III_ODC"/>
    <property type="match status" value="1"/>
</dbReference>
<dbReference type="FunFam" id="3.20.20.10:FF:000005">
    <property type="entry name" value="Ornithine decarboxylase"/>
    <property type="match status" value="1"/>
</dbReference>
<dbReference type="Gene3D" id="3.20.20.10">
    <property type="entry name" value="Alanine racemase"/>
    <property type="match status" value="1"/>
</dbReference>
<dbReference type="Gene3D" id="2.40.37.10">
    <property type="entry name" value="Lyase, Ornithine Decarboxylase, Chain A, domain 1"/>
    <property type="match status" value="1"/>
</dbReference>
<dbReference type="InterPro" id="IPR009006">
    <property type="entry name" value="Ala_racemase/Decarboxylase_C"/>
</dbReference>
<dbReference type="InterPro" id="IPR022643">
    <property type="entry name" value="De-COase2_C"/>
</dbReference>
<dbReference type="InterPro" id="IPR022657">
    <property type="entry name" value="De-COase2_CS"/>
</dbReference>
<dbReference type="InterPro" id="IPR022644">
    <property type="entry name" value="De-COase2_N"/>
</dbReference>
<dbReference type="InterPro" id="IPR022653">
    <property type="entry name" value="De-COase2_pyr-phos_BS"/>
</dbReference>
<dbReference type="InterPro" id="IPR000183">
    <property type="entry name" value="Orn/DAP/Arg_de-COase"/>
</dbReference>
<dbReference type="InterPro" id="IPR002433">
    <property type="entry name" value="Orn_de-COase"/>
</dbReference>
<dbReference type="InterPro" id="IPR029066">
    <property type="entry name" value="PLP-binding_barrel"/>
</dbReference>
<dbReference type="PANTHER" id="PTHR11482">
    <property type="entry name" value="ARGININE/DIAMINOPIMELATE/ORNITHINE DECARBOXYLASE"/>
    <property type="match status" value="1"/>
</dbReference>
<dbReference type="PANTHER" id="PTHR11482:SF6">
    <property type="entry name" value="ORNITHINE DECARBOXYLASE 1-RELATED"/>
    <property type="match status" value="1"/>
</dbReference>
<dbReference type="Pfam" id="PF02784">
    <property type="entry name" value="Orn_Arg_deC_N"/>
    <property type="match status" value="1"/>
</dbReference>
<dbReference type="Pfam" id="PF00278">
    <property type="entry name" value="Orn_DAP_Arg_deC"/>
    <property type="match status" value="1"/>
</dbReference>
<dbReference type="PRINTS" id="PR01179">
    <property type="entry name" value="ODADCRBXLASE"/>
</dbReference>
<dbReference type="PRINTS" id="PR01182">
    <property type="entry name" value="ORNDCRBXLASE"/>
</dbReference>
<dbReference type="SUPFAM" id="SSF50621">
    <property type="entry name" value="Alanine racemase C-terminal domain-like"/>
    <property type="match status" value="1"/>
</dbReference>
<dbReference type="SUPFAM" id="SSF51419">
    <property type="entry name" value="PLP-binding barrel"/>
    <property type="match status" value="1"/>
</dbReference>
<dbReference type="PROSITE" id="PS00878">
    <property type="entry name" value="ODR_DC_2_1"/>
    <property type="match status" value="1"/>
</dbReference>
<dbReference type="PROSITE" id="PS00879">
    <property type="entry name" value="ODR_DC_2_2"/>
    <property type="match status" value="1"/>
</dbReference>
<keyword id="KW-0963">Cytoplasm</keyword>
<keyword id="KW-0210">Decarboxylase</keyword>
<keyword id="KW-0456">Lyase</keyword>
<keyword id="KW-0620">Polyamine biosynthesis</keyword>
<keyword id="KW-0663">Pyridoxal phosphate</keyword>
<keyword id="KW-1185">Reference proteome</keyword>
<evidence type="ECO:0000250" key="1">
    <source>
        <dbReference type="UniProtKB" id="P00860"/>
    </source>
</evidence>
<evidence type="ECO:0000250" key="2">
    <source>
        <dbReference type="UniProtKB" id="P07805"/>
    </source>
</evidence>
<evidence type="ECO:0000250" key="3">
    <source>
        <dbReference type="UniProtKB" id="P08432"/>
    </source>
</evidence>
<evidence type="ECO:0000250" key="4">
    <source>
        <dbReference type="UniProtKB" id="P11926"/>
    </source>
</evidence>
<evidence type="ECO:0000305" key="5"/>